<reference key="1">
    <citation type="journal article" date="1992" name="J. Bacteriol.">
        <title>Cloning and sequence analysis of the Chlamydia trachomatis spc ribosomal protein gene cluster.</title>
        <authorList>
            <person name="Kaul R."/>
            <person name="Gray G.J."/>
            <person name="Koehncke N.R."/>
            <person name="Gu L.J."/>
        </authorList>
    </citation>
    <scope>NUCLEOTIDE SEQUENCE [GENOMIC DNA]</scope>
</reference>
<reference key="2">
    <citation type="journal article" date="2008" name="Genome Res.">
        <title>Chlamydia trachomatis: genome sequence analysis of lymphogranuloma venereum isolates.</title>
        <authorList>
            <person name="Thomson N.R."/>
            <person name="Holden M.T.G."/>
            <person name="Carder C."/>
            <person name="Lennard N."/>
            <person name="Lockey S.J."/>
            <person name="Marsh P."/>
            <person name="Skipp P."/>
            <person name="O'Connor C.D."/>
            <person name="Goodhead I."/>
            <person name="Norbertzcak H."/>
            <person name="Harris B."/>
            <person name="Ormond D."/>
            <person name="Rance R."/>
            <person name="Quail M.A."/>
            <person name="Parkhill J."/>
            <person name="Stephens R.S."/>
            <person name="Clarke I.N."/>
        </authorList>
    </citation>
    <scope>NUCLEOTIDE SEQUENCE [LARGE SCALE GENOMIC DNA]</scope>
    <source>
        <strain>ATCC VR-902B / DSM 19102 / 434/Bu</strain>
    </source>
</reference>
<reference key="3">
    <citation type="journal article" date="1987" name="J. Bacteriol.">
        <title>Cloning, expression, and primary structure of a Chlamydia trachomatis binding protein.</title>
        <authorList>
            <person name="Kaul R."/>
            <person name="Roy K.L."/>
            <person name="Wenman W.M."/>
        </authorList>
    </citation>
    <scope>NUCLEOTIDE SEQUENCE [GENOMIC DNA] OF 1-92</scope>
</reference>
<accession>B0B888</accession>
<accession>O84520</accession>
<accession>P10553</accession>
<accession>P25056</accession>
<keyword id="KW-0687">Ribonucleoprotein</keyword>
<keyword id="KW-0689">Ribosomal protein</keyword>
<keyword id="KW-0694">RNA-binding</keyword>
<keyword id="KW-0699">rRNA-binding</keyword>
<protein>
    <recommendedName>
        <fullName evidence="1">Large ribosomal subunit protein uL6</fullName>
    </recommendedName>
    <alternativeName>
        <fullName evidence="2">50S ribosomal protein L6</fullName>
    </alternativeName>
</protein>
<evidence type="ECO:0000255" key="1">
    <source>
        <dbReference type="HAMAP-Rule" id="MF_01365"/>
    </source>
</evidence>
<evidence type="ECO:0000305" key="2"/>
<evidence type="ECO:0000305" key="3">
    <source>
    </source>
</evidence>
<gene>
    <name evidence="1" type="primary">rplF</name>
    <name type="ordered locus">CTL0776</name>
</gene>
<organism>
    <name type="scientific">Chlamydia trachomatis serovar L2 (strain ATCC VR-902B / DSM 19102 / 434/Bu)</name>
    <dbReference type="NCBI Taxonomy" id="471472"/>
    <lineage>
        <taxon>Bacteria</taxon>
        <taxon>Pseudomonadati</taxon>
        <taxon>Chlamydiota</taxon>
        <taxon>Chlamydiia</taxon>
        <taxon>Chlamydiales</taxon>
        <taxon>Chlamydiaceae</taxon>
        <taxon>Chlamydia/Chlamydophila group</taxon>
        <taxon>Chlamydia</taxon>
    </lineage>
</organism>
<name>RL6_CHLT2</name>
<feature type="chain" id="PRO_1000143960" description="Large ribosomal subunit protein uL6">
    <location>
        <begin position="1"/>
        <end position="183"/>
    </location>
</feature>
<comment type="function">
    <text evidence="1">This protein binds to the 23S rRNA, and is important in its secondary structure. It is located near the subunit interface in the base of the L7/L12 stalk, and near the tRNA binding site of the peptidyltransferase center.</text>
</comment>
<comment type="subunit">
    <text evidence="1">Part of the 50S ribosomal subunit.</text>
</comment>
<comment type="similarity">
    <text evidence="1">Belongs to the universal ribosomal protein uL6 family.</text>
</comment>
<comment type="caution">
    <text evidence="3">Was originally (PubMed:3312167) thought to be an outer membrane binding protein (chlanectin). The sequence was incorrect due to a cloning artifact.</text>
</comment>
<sequence>MSRKARDPIVLPQGVEVSIQNDEISVKGPKGSLTQVLAKEVEIAVKGNEVFVAPAAHVVDRPGRMQGLYWALIANMVKGVHTGFEKRLEMIGVGFRAAVQGSLLDLSIGVSHPTKMPIPTGLEVSVEKNTLISIKGINKQLVGEFAACVRAKRPPEPYKGKGIRYENEYVRRKAGKAAKTGKK</sequence>
<proteinExistence type="inferred from homology"/>
<dbReference type="EMBL" id="M80325">
    <property type="protein sequence ID" value="AAA23176.1"/>
    <property type="molecule type" value="Genomic_DNA"/>
</dbReference>
<dbReference type="EMBL" id="AM884176">
    <property type="protein sequence ID" value="CAP04214.1"/>
    <property type="molecule type" value="Genomic_DNA"/>
</dbReference>
<dbReference type="EMBL" id="M17875">
    <property type="protein sequence ID" value="AAA23157.1"/>
    <property type="status" value="ALT_SEQ"/>
    <property type="molecule type" value="Genomic_DNA"/>
</dbReference>
<dbReference type="PIR" id="A37315">
    <property type="entry name" value="A37315"/>
</dbReference>
<dbReference type="RefSeq" id="WP_009873869.1">
    <property type="nucleotide sequence ID" value="NC_010287.1"/>
</dbReference>
<dbReference type="RefSeq" id="YP_001654847.1">
    <property type="nucleotide sequence ID" value="NC_010287.1"/>
</dbReference>
<dbReference type="SMR" id="B0B888"/>
<dbReference type="KEGG" id="ctb:CTL0776"/>
<dbReference type="PATRIC" id="fig|471472.4.peg.832"/>
<dbReference type="HOGENOM" id="CLU_065464_1_2_0"/>
<dbReference type="Proteomes" id="UP001154402">
    <property type="component" value="Chromosome"/>
</dbReference>
<dbReference type="GO" id="GO:0022625">
    <property type="term" value="C:cytosolic large ribosomal subunit"/>
    <property type="evidence" value="ECO:0007669"/>
    <property type="project" value="TreeGrafter"/>
</dbReference>
<dbReference type="GO" id="GO:0019843">
    <property type="term" value="F:rRNA binding"/>
    <property type="evidence" value="ECO:0007669"/>
    <property type="project" value="UniProtKB-UniRule"/>
</dbReference>
<dbReference type="GO" id="GO:0003735">
    <property type="term" value="F:structural constituent of ribosome"/>
    <property type="evidence" value="ECO:0007669"/>
    <property type="project" value="InterPro"/>
</dbReference>
<dbReference type="GO" id="GO:0002181">
    <property type="term" value="P:cytoplasmic translation"/>
    <property type="evidence" value="ECO:0007669"/>
    <property type="project" value="TreeGrafter"/>
</dbReference>
<dbReference type="FunFam" id="3.90.930.12:FF:000001">
    <property type="entry name" value="50S ribosomal protein L6"/>
    <property type="match status" value="1"/>
</dbReference>
<dbReference type="Gene3D" id="3.90.930.12">
    <property type="entry name" value="Ribosomal protein L6, alpha-beta domain"/>
    <property type="match status" value="2"/>
</dbReference>
<dbReference type="HAMAP" id="MF_01365_B">
    <property type="entry name" value="Ribosomal_uL6_B"/>
    <property type="match status" value="1"/>
</dbReference>
<dbReference type="InterPro" id="IPR000702">
    <property type="entry name" value="Ribosomal_uL6-like"/>
</dbReference>
<dbReference type="InterPro" id="IPR036789">
    <property type="entry name" value="Ribosomal_uL6-like_a/b-dom_sf"/>
</dbReference>
<dbReference type="InterPro" id="IPR020040">
    <property type="entry name" value="Ribosomal_uL6_a/b-dom"/>
</dbReference>
<dbReference type="InterPro" id="IPR019906">
    <property type="entry name" value="Ribosomal_uL6_bac-type"/>
</dbReference>
<dbReference type="InterPro" id="IPR002358">
    <property type="entry name" value="Ribosomal_uL6_CS"/>
</dbReference>
<dbReference type="NCBIfam" id="TIGR03654">
    <property type="entry name" value="L6_bact"/>
    <property type="match status" value="1"/>
</dbReference>
<dbReference type="PANTHER" id="PTHR11655">
    <property type="entry name" value="60S/50S RIBOSOMAL PROTEIN L6/L9"/>
    <property type="match status" value="1"/>
</dbReference>
<dbReference type="PANTHER" id="PTHR11655:SF14">
    <property type="entry name" value="LARGE RIBOSOMAL SUBUNIT PROTEIN UL6M"/>
    <property type="match status" value="1"/>
</dbReference>
<dbReference type="Pfam" id="PF00347">
    <property type="entry name" value="Ribosomal_L6"/>
    <property type="match status" value="2"/>
</dbReference>
<dbReference type="PIRSF" id="PIRSF002162">
    <property type="entry name" value="Ribosomal_L6"/>
    <property type="match status" value="1"/>
</dbReference>
<dbReference type="PRINTS" id="PR00059">
    <property type="entry name" value="RIBOSOMALL6"/>
</dbReference>
<dbReference type="SUPFAM" id="SSF56053">
    <property type="entry name" value="Ribosomal protein L6"/>
    <property type="match status" value="2"/>
</dbReference>
<dbReference type="PROSITE" id="PS00525">
    <property type="entry name" value="RIBOSOMAL_L6_1"/>
    <property type="match status" value="1"/>
</dbReference>